<keyword id="KW-0004">4Fe-4S</keyword>
<keyword id="KW-0408">Iron</keyword>
<keyword id="KW-0411">Iron-sulfur</keyword>
<keyword id="KW-0479">Metal-binding</keyword>
<keyword id="KW-0949">S-adenosyl-L-methionine</keyword>
<keyword id="KW-0808">Transferase</keyword>
<protein>
    <recommendedName>
        <fullName evidence="1">5-amino-6-(D-ribitylamino)uracil--L-tyrosine 4-hydroxyphenyl transferase 2</fullName>
        <ecNumber evidence="1">2.5.1.147</ecNumber>
    </recommendedName>
    <alternativeName>
        <fullName evidence="1">FO synthase subunit 2 2</fullName>
    </alternativeName>
</protein>
<gene>
    <name evidence="1" type="primary">cofH2</name>
    <name type="ordered locus">MM_2496</name>
</gene>
<feature type="chain" id="PRO_0000141721" description="5-amino-6-(D-ribitylamino)uracil--L-tyrosine 4-hydroxyphenyl transferase 2">
    <location>
        <begin position="1"/>
        <end position="384"/>
    </location>
</feature>
<feature type="domain" description="Radical SAM core" evidence="2">
    <location>
        <begin position="53"/>
        <end position="286"/>
    </location>
</feature>
<feature type="binding site" evidence="1">
    <location>
        <position position="67"/>
    </location>
    <ligand>
        <name>[4Fe-4S] cluster</name>
        <dbReference type="ChEBI" id="CHEBI:49883"/>
        <note>4Fe-4S-S-AdoMet</note>
    </ligand>
</feature>
<feature type="binding site" evidence="1">
    <location>
        <position position="71"/>
    </location>
    <ligand>
        <name>[4Fe-4S] cluster</name>
        <dbReference type="ChEBI" id="CHEBI:49883"/>
        <note>4Fe-4S-S-AdoMet</note>
    </ligand>
</feature>
<feature type="binding site" evidence="1">
    <location>
        <position position="74"/>
    </location>
    <ligand>
        <name>[4Fe-4S] cluster</name>
        <dbReference type="ChEBI" id="CHEBI:49883"/>
        <note>4Fe-4S-S-AdoMet</note>
    </ligand>
</feature>
<comment type="function">
    <text evidence="1">Catalyzes the radical-mediated synthesis of 5-amino-5-(4-hydroxybenzyl)-6-(D-ribitylimino)-5,6-dihydrouracil from 5-amino-6-(D-ribitylamino)uracil and L-tyrosine.</text>
</comment>
<comment type="catalytic activity">
    <reaction evidence="1">
        <text>5-amino-6-(D-ribitylamino)uracil + L-tyrosine + S-adenosyl-L-methionine = 5-amino-5-(4-hydroxybenzyl)-6-(D-ribitylimino)-5,6-dihydrouracil + 2-iminoacetate + 5'-deoxyadenosine + L-methionine + H(+)</text>
        <dbReference type="Rhea" id="RHEA:55200"/>
        <dbReference type="ChEBI" id="CHEBI:15378"/>
        <dbReference type="ChEBI" id="CHEBI:15934"/>
        <dbReference type="ChEBI" id="CHEBI:17319"/>
        <dbReference type="ChEBI" id="CHEBI:57844"/>
        <dbReference type="ChEBI" id="CHEBI:58315"/>
        <dbReference type="ChEBI" id="CHEBI:59789"/>
        <dbReference type="ChEBI" id="CHEBI:77846"/>
        <dbReference type="ChEBI" id="CHEBI:85936"/>
        <dbReference type="EC" id="2.5.1.147"/>
    </reaction>
</comment>
<comment type="cofactor">
    <cofactor evidence="1">
        <name>[4Fe-4S] cluster</name>
        <dbReference type="ChEBI" id="CHEBI:49883"/>
    </cofactor>
    <text evidence="1">Binds 1 [4Fe-4S] cluster. The cluster is coordinated with 3 cysteines and an exchangeable S-adenosyl-L-methionine.</text>
</comment>
<comment type="pathway">
    <text evidence="1">Cofactor biosynthesis; coenzyme F0 biosynthesis.</text>
</comment>
<comment type="subunit">
    <text evidence="1">Consists of two subunits, CofG and CofH.</text>
</comment>
<comment type="similarity">
    <text evidence="1">Belongs to the radical SAM superfamily. CofH family.</text>
</comment>
<comment type="sequence caution" evidence="3">
    <conflict type="erroneous initiation">
        <sequence resource="EMBL-CDS" id="AAM32192"/>
    </conflict>
</comment>
<reference key="1">
    <citation type="journal article" date="2002" name="J. Mol. Microbiol. Biotechnol.">
        <title>The genome of Methanosarcina mazei: evidence for lateral gene transfer between Bacteria and Archaea.</title>
        <authorList>
            <person name="Deppenmeier U."/>
            <person name="Johann A."/>
            <person name="Hartsch T."/>
            <person name="Merkl R."/>
            <person name="Schmitz R.A."/>
            <person name="Martinez-Arias R."/>
            <person name="Henne A."/>
            <person name="Wiezer A."/>
            <person name="Baeumer S."/>
            <person name="Jacobi C."/>
            <person name="Brueggemann H."/>
            <person name="Lienard T."/>
            <person name="Christmann A."/>
            <person name="Boemecke M."/>
            <person name="Steckel S."/>
            <person name="Bhattacharyya A."/>
            <person name="Lykidis A."/>
            <person name="Overbeek R."/>
            <person name="Klenk H.-P."/>
            <person name="Gunsalus R.P."/>
            <person name="Fritz H.-J."/>
            <person name="Gottschalk G."/>
        </authorList>
    </citation>
    <scope>NUCLEOTIDE SEQUENCE [LARGE SCALE GENOMIC DNA]</scope>
    <source>
        <strain>ATCC BAA-159 / DSM 3647 / Goe1 / Go1 / JCM 11833 / OCM 88</strain>
    </source>
</reference>
<accession>Q8PU53</accession>
<name>COFH2_METMA</name>
<evidence type="ECO:0000255" key="1">
    <source>
        <dbReference type="HAMAP-Rule" id="MF_01612"/>
    </source>
</evidence>
<evidence type="ECO:0000255" key="2">
    <source>
        <dbReference type="PROSITE-ProRule" id="PRU01266"/>
    </source>
</evidence>
<evidence type="ECO:0000305" key="3"/>
<proteinExistence type="inferred from homology"/>
<dbReference type="EC" id="2.5.1.147" evidence="1"/>
<dbReference type="EMBL" id="AE008384">
    <property type="protein sequence ID" value="AAM32192.1"/>
    <property type="status" value="ALT_INIT"/>
    <property type="molecule type" value="Genomic_DNA"/>
</dbReference>
<dbReference type="SMR" id="Q8PU53"/>
<dbReference type="KEGG" id="mma:MM_2496"/>
<dbReference type="PATRIC" id="fig|192952.21.peg.2857"/>
<dbReference type="eggNOG" id="arCOG00656">
    <property type="taxonomic scope" value="Archaea"/>
</dbReference>
<dbReference type="HOGENOM" id="CLU_040406_1_0_2"/>
<dbReference type="UniPathway" id="UPA00072"/>
<dbReference type="Proteomes" id="UP000000595">
    <property type="component" value="Chromosome"/>
</dbReference>
<dbReference type="GO" id="GO:0051539">
    <property type="term" value="F:4 iron, 4 sulfur cluster binding"/>
    <property type="evidence" value="ECO:0007669"/>
    <property type="project" value="UniProtKB-KW"/>
</dbReference>
<dbReference type="GO" id="GO:0141093">
    <property type="term" value="F:5-amino-6-(D-ribitylamino)uracil--L-tyrosine 4-hydroxyphenyl transferase activity"/>
    <property type="evidence" value="ECO:0007669"/>
    <property type="project" value="UniProtKB-EC"/>
</dbReference>
<dbReference type="GO" id="GO:0044689">
    <property type="term" value="F:7,8-didemethyl-8-hydroxy-5-deazariboflavin synthase activity"/>
    <property type="evidence" value="ECO:0007669"/>
    <property type="project" value="TreeGrafter"/>
</dbReference>
<dbReference type="GO" id="GO:0005506">
    <property type="term" value="F:iron ion binding"/>
    <property type="evidence" value="ECO:0007669"/>
    <property type="project" value="UniProtKB-UniRule"/>
</dbReference>
<dbReference type="CDD" id="cd01335">
    <property type="entry name" value="Radical_SAM"/>
    <property type="match status" value="1"/>
</dbReference>
<dbReference type="Gene3D" id="3.20.20.70">
    <property type="entry name" value="Aldolase class I"/>
    <property type="match status" value="1"/>
</dbReference>
<dbReference type="HAMAP" id="MF_01612">
    <property type="entry name" value="FO_synth_sub2"/>
    <property type="match status" value="1"/>
</dbReference>
<dbReference type="InterPro" id="IPR013785">
    <property type="entry name" value="Aldolase_TIM"/>
</dbReference>
<dbReference type="InterPro" id="IPR045567">
    <property type="entry name" value="CofH/MnqC-like_C"/>
</dbReference>
<dbReference type="InterPro" id="IPR019940">
    <property type="entry name" value="CofH_family"/>
</dbReference>
<dbReference type="InterPro" id="IPR006638">
    <property type="entry name" value="Elp3/MiaA/NifB-like_rSAM"/>
</dbReference>
<dbReference type="InterPro" id="IPR034405">
    <property type="entry name" value="F420"/>
</dbReference>
<dbReference type="InterPro" id="IPR020050">
    <property type="entry name" value="FO_synthase_su2"/>
</dbReference>
<dbReference type="InterPro" id="IPR007197">
    <property type="entry name" value="rSAM"/>
</dbReference>
<dbReference type="NCBIfam" id="TIGR00423">
    <property type="entry name" value="CofH family radical SAM protein"/>
    <property type="match status" value="1"/>
</dbReference>
<dbReference type="NCBIfam" id="TIGR03551">
    <property type="entry name" value="F420_cofH"/>
    <property type="match status" value="1"/>
</dbReference>
<dbReference type="NCBIfam" id="NF005609">
    <property type="entry name" value="PRK07360.1"/>
    <property type="match status" value="1"/>
</dbReference>
<dbReference type="PANTHER" id="PTHR43076">
    <property type="entry name" value="FO SYNTHASE (COFH)"/>
    <property type="match status" value="1"/>
</dbReference>
<dbReference type="PANTHER" id="PTHR43076:SF1">
    <property type="entry name" value="LIPOYL SYNTHASE 2"/>
    <property type="match status" value="1"/>
</dbReference>
<dbReference type="Pfam" id="PF19288">
    <property type="entry name" value="CofH_C"/>
    <property type="match status" value="1"/>
</dbReference>
<dbReference type="Pfam" id="PF04055">
    <property type="entry name" value="Radical_SAM"/>
    <property type="match status" value="1"/>
</dbReference>
<dbReference type="PIRSF" id="PIRSF004762">
    <property type="entry name" value="CHP00423"/>
    <property type="match status" value="1"/>
</dbReference>
<dbReference type="SFLD" id="SFLDF00293">
    <property type="entry name" value="((2_3_4_5-tetrahydroxypentyl)a"/>
    <property type="match status" value="1"/>
</dbReference>
<dbReference type="SFLD" id="SFLDF00343">
    <property type="entry name" value="aminofutalosine_synthase_(mqnE"/>
    <property type="match status" value="1"/>
</dbReference>
<dbReference type="SFLD" id="SFLDG01064">
    <property type="entry name" value="F420__menaquinone_cofactor_bio"/>
    <property type="match status" value="1"/>
</dbReference>
<dbReference type="SMART" id="SM00729">
    <property type="entry name" value="Elp3"/>
    <property type="match status" value="1"/>
</dbReference>
<dbReference type="SUPFAM" id="SSF102114">
    <property type="entry name" value="Radical SAM enzymes"/>
    <property type="match status" value="1"/>
</dbReference>
<dbReference type="PROSITE" id="PS51918">
    <property type="entry name" value="RADICAL_SAM"/>
    <property type="match status" value="1"/>
</dbReference>
<sequence length="384" mass="42094">MYTKKPTIPENVIERAYKGKCTKEDALLLLEGNPFELFELANDLRAIAAGDTVSYVVNRNIYITNKCVGNCGFCAYRTEKGYILSIEEILKKAGDARKAGAVEVCVQGGYTPEADMEFYLEVIESLKAEYPDLCLHALSPMEVNYAAETSGMSVEEALRRLKKSGLDSLTGTSAEILSDRVRKIICPSKISTQQWIDTVTAAHKAGISTNATIMYGHVETLKERLDHVFTIREIQKETGGFTELIPMSFLPYNNPVGEKMLASGKFSSTGLEDLQLIAISRVILHTYVKNIQATWVKLGKKLAQVALQCGANDLGGTLMEDQISTASGGSHGEYVSPAEFEWMIKGAGRVPVQRDTLYRKIESGFPGQEGLFPGYAKAGMGSKE</sequence>
<organism>
    <name type="scientific">Methanosarcina mazei (strain ATCC BAA-159 / DSM 3647 / Goe1 / Go1 / JCM 11833 / OCM 88)</name>
    <name type="common">Methanosarcina frisia</name>
    <dbReference type="NCBI Taxonomy" id="192952"/>
    <lineage>
        <taxon>Archaea</taxon>
        <taxon>Methanobacteriati</taxon>
        <taxon>Methanobacteriota</taxon>
        <taxon>Stenosarchaea group</taxon>
        <taxon>Methanomicrobia</taxon>
        <taxon>Methanosarcinales</taxon>
        <taxon>Methanosarcinaceae</taxon>
        <taxon>Methanosarcina</taxon>
    </lineage>
</organism>